<dbReference type="EC" id="2.7.4.6" evidence="1"/>
<dbReference type="EMBL" id="AE000520">
    <property type="protein sequence ID" value="AAC65961.1"/>
    <property type="molecule type" value="Genomic_DNA"/>
</dbReference>
<dbReference type="PIR" id="F71252">
    <property type="entry name" value="F71252"/>
</dbReference>
<dbReference type="RefSeq" id="WP_010882454.1">
    <property type="nucleotide sequence ID" value="NC_021490.2"/>
</dbReference>
<dbReference type="SMR" id="O83974"/>
<dbReference type="IntAct" id="O83974">
    <property type="interactions" value="5"/>
</dbReference>
<dbReference type="STRING" id="243276.TP_1010"/>
<dbReference type="EnsemblBacteria" id="AAC65961">
    <property type="protein sequence ID" value="AAC65961"/>
    <property type="gene ID" value="TP_1010"/>
</dbReference>
<dbReference type="GeneID" id="93876757"/>
<dbReference type="KEGG" id="tpa:TP_1010"/>
<dbReference type="KEGG" id="tpw:TPANIC_1010"/>
<dbReference type="eggNOG" id="COG0105">
    <property type="taxonomic scope" value="Bacteria"/>
</dbReference>
<dbReference type="HOGENOM" id="CLU_060216_6_3_12"/>
<dbReference type="OrthoDB" id="9801161at2"/>
<dbReference type="Proteomes" id="UP000000811">
    <property type="component" value="Chromosome"/>
</dbReference>
<dbReference type="GO" id="GO:0005737">
    <property type="term" value="C:cytoplasm"/>
    <property type="evidence" value="ECO:0007669"/>
    <property type="project" value="UniProtKB-SubCell"/>
</dbReference>
<dbReference type="GO" id="GO:0005524">
    <property type="term" value="F:ATP binding"/>
    <property type="evidence" value="ECO:0007669"/>
    <property type="project" value="UniProtKB-UniRule"/>
</dbReference>
<dbReference type="GO" id="GO:0046872">
    <property type="term" value="F:metal ion binding"/>
    <property type="evidence" value="ECO:0007669"/>
    <property type="project" value="UniProtKB-KW"/>
</dbReference>
<dbReference type="GO" id="GO:0004550">
    <property type="term" value="F:nucleoside diphosphate kinase activity"/>
    <property type="evidence" value="ECO:0007669"/>
    <property type="project" value="UniProtKB-UniRule"/>
</dbReference>
<dbReference type="GO" id="GO:0006241">
    <property type="term" value="P:CTP biosynthetic process"/>
    <property type="evidence" value="ECO:0007669"/>
    <property type="project" value="UniProtKB-UniRule"/>
</dbReference>
<dbReference type="GO" id="GO:0006183">
    <property type="term" value="P:GTP biosynthetic process"/>
    <property type="evidence" value="ECO:0007669"/>
    <property type="project" value="UniProtKB-UniRule"/>
</dbReference>
<dbReference type="GO" id="GO:0006228">
    <property type="term" value="P:UTP biosynthetic process"/>
    <property type="evidence" value="ECO:0007669"/>
    <property type="project" value="UniProtKB-UniRule"/>
</dbReference>
<dbReference type="CDD" id="cd04413">
    <property type="entry name" value="NDPk_I"/>
    <property type="match status" value="1"/>
</dbReference>
<dbReference type="FunFam" id="3.30.70.141:FF:000003">
    <property type="entry name" value="Nucleoside diphosphate kinase"/>
    <property type="match status" value="1"/>
</dbReference>
<dbReference type="Gene3D" id="3.30.70.141">
    <property type="entry name" value="Nucleoside diphosphate kinase-like domain"/>
    <property type="match status" value="1"/>
</dbReference>
<dbReference type="HAMAP" id="MF_00451">
    <property type="entry name" value="NDP_kinase"/>
    <property type="match status" value="1"/>
</dbReference>
<dbReference type="InterPro" id="IPR034907">
    <property type="entry name" value="NDK-like_dom"/>
</dbReference>
<dbReference type="InterPro" id="IPR036850">
    <property type="entry name" value="NDK-like_dom_sf"/>
</dbReference>
<dbReference type="InterPro" id="IPR001564">
    <property type="entry name" value="Nucleoside_diP_kinase"/>
</dbReference>
<dbReference type="InterPro" id="IPR023005">
    <property type="entry name" value="Nucleoside_diP_kinase_AS"/>
</dbReference>
<dbReference type="NCBIfam" id="NF001908">
    <property type="entry name" value="PRK00668.1"/>
    <property type="match status" value="1"/>
</dbReference>
<dbReference type="PANTHER" id="PTHR11349">
    <property type="entry name" value="NUCLEOSIDE DIPHOSPHATE KINASE"/>
    <property type="match status" value="1"/>
</dbReference>
<dbReference type="Pfam" id="PF00334">
    <property type="entry name" value="NDK"/>
    <property type="match status" value="1"/>
</dbReference>
<dbReference type="PRINTS" id="PR01243">
    <property type="entry name" value="NUCDPKINASE"/>
</dbReference>
<dbReference type="SMART" id="SM00562">
    <property type="entry name" value="NDK"/>
    <property type="match status" value="1"/>
</dbReference>
<dbReference type="SUPFAM" id="SSF54919">
    <property type="entry name" value="Nucleoside diphosphate kinase, NDK"/>
    <property type="match status" value="1"/>
</dbReference>
<dbReference type="PROSITE" id="PS00469">
    <property type="entry name" value="NDPK"/>
    <property type="match status" value="1"/>
</dbReference>
<dbReference type="PROSITE" id="PS51374">
    <property type="entry name" value="NDPK_LIKE"/>
    <property type="match status" value="1"/>
</dbReference>
<proteinExistence type="inferred from homology"/>
<protein>
    <recommendedName>
        <fullName evidence="1">Nucleoside diphosphate kinase</fullName>
        <shortName evidence="1">NDK</shortName>
        <shortName evidence="1">NDP kinase</shortName>
        <ecNumber evidence="1">2.7.4.6</ecNumber>
    </recommendedName>
    <alternativeName>
        <fullName evidence="1">Nucleoside-2-P kinase</fullName>
    </alternativeName>
</protein>
<keyword id="KW-0067">ATP-binding</keyword>
<keyword id="KW-0963">Cytoplasm</keyword>
<keyword id="KW-0418">Kinase</keyword>
<keyword id="KW-0460">Magnesium</keyword>
<keyword id="KW-0479">Metal-binding</keyword>
<keyword id="KW-0546">Nucleotide metabolism</keyword>
<keyword id="KW-0547">Nucleotide-binding</keyword>
<keyword id="KW-0597">Phosphoprotein</keyword>
<keyword id="KW-1185">Reference proteome</keyword>
<keyword id="KW-0808">Transferase</keyword>
<organism>
    <name type="scientific">Treponema pallidum (strain Nichols)</name>
    <dbReference type="NCBI Taxonomy" id="243276"/>
    <lineage>
        <taxon>Bacteria</taxon>
        <taxon>Pseudomonadati</taxon>
        <taxon>Spirochaetota</taxon>
        <taxon>Spirochaetia</taxon>
        <taxon>Spirochaetales</taxon>
        <taxon>Treponemataceae</taxon>
        <taxon>Treponema</taxon>
    </lineage>
</organism>
<accession>O83974</accession>
<reference key="1">
    <citation type="journal article" date="1998" name="Science">
        <title>Complete genome sequence of Treponema pallidum, the syphilis spirochete.</title>
        <authorList>
            <person name="Fraser C.M."/>
            <person name="Norris S.J."/>
            <person name="Weinstock G.M."/>
            <person name="White O."/>
            <person name="Sutton G.G."/>
            <person name="Dodson R.J."/>
            <person name="Gwinn M.L."/>
            <person name="Hickey E.K."/>
            <person name="Clayton R.A."/>
            <person name="Ketchum K.A."/>
            <person name="Sodergren E."/>
            <person name="Hardham J.M."/>
            <person name="McLeod M.P."/>
            <person name="Salzberg S.L."/>
            <person name="Peterson J.D."/>
            <person name="Khalak H.G."/>
            <person name="Richardson D.L."/>
            <person name="Howell J.K."/>
            <person name="Chidambaram M."/>
            <person name="Utterback T.R."/>
            <person name="McDonald L.A."/>
            <person name="Artiach P."/>
            <person name="Bowman C."/>
            <person name="Cotton M.D."/>
            <person name="Fujii C."/>
            <person name="Garland S.A."/>
            <person name="Hatch B."/>
            <person name="Horst K."/>
            <person name="Roberts K.M."/>
            <person name="Sandusky M."/>
            <person name="Weidman J.F."/>
            <person name="Smith H.O."/>
            <person name="Venter J.C."/>
        </authorList>
    </citation>
    <scope>NUCLEOTIDE SEQUENCE [LARGE SCALE GENOMIC DNA]</scope>
    <source>
        <strain>Nichols</strain>
    </source>
</reference>
<sequence length="149" mass="16657">MAFETTFVMLKPGVLQRRLVGEVLSRFERKGLVLTALRLLCVDTATAELHYAEHREKPFYPSLIAYITSAPVVALAFKGENAISLVRTLCGSTRVEHAQPGTIRGDFALRTTTNIVHASDSPESAARELALYFSAQDFVEWRDGNYDFF</sequence>
<name>NDK_TREPA</name>
<comment type="function">
    <text evidence="1">Major role in the synthesis of nucleoside triphosphates other than ATP. The ATP gamma phosphate is transferred to the NDP beta phosphate via a ping-pong mechanism, using a phosphorylated active-site intermediate.</text>
</comment>
<comment type="catalytic activity">
    <reaction evidence="1">
        <text>a 2'-deoxyribonucleoside 5'-diphosphate + ATP = a 2'-deoxyribonucleoside 5'-triphosphate + ADP</text>
        <dbReference type="Rhea" id="RHEA:44640"/>
        <dbReference type="ChEBI" id="CHEBI:30616"/>
        <dbReference type="ChEBI" id="CHEBI:61560"/>
        <dbReference type="ChEBI" id="CHEBI:73316"/>
        <dbReference type="ChEBI" id="CHEBI:456216"/>
        <dbReference type="EC" id="2.7.4.6"/>
    </reaction>
</comment>
<comment type="catalytic activity">
    <reaction evidence="1">
        <text>a ribonucleoside 5'-diphosphate + ATP = a ribonucleoside 5'-triphosphate + ADP</text>
        <dbReference type="Rhea" id="RHEA:18113"/>
        <dbReference type="ChEBI" id="CHEBI:30616"/>
        <dbReference type="ChEBI" id="CHEBI:57930"/>
        <dbReference type="ChEBI" id="CHEBI:61557"/>
        <dbReference type="ChEBI" id="CHEBI:456216"/>
        <dbReference type="EC" id="2.7.4.6"/>
    </reaction>
</comment>
<comment type="cofactor">
    <cofactor evidence="1">
        <name>Mg(2+)</name>
        <dbReference type="ChEBI" id="CHEBI:18420"/>
    </cofactor>
</comment>
<comment type="subunit">
    <text evidence="1">Homotetramer.</text>
</comment>
<comment type="subcellular location">
    <subcellularLocation>
        <location evidence="1">Cytoplasm</location>
    </subcellularLocation>
</comment>
<comment type="similarity">
    <text evidence="1 2">Belongs to the NDK family.</text>
</comment>
<feature type="chain" id="PRO_0000137069" description="Nucleoside diphosphate kinase">
    <location>
        <begin position="1"/>
        <end position="149"/>
    </location>
</feature>
<feature type="active site" description="Pros-phosphohistidine intermediate" evidence="1">
    <location>
        <position position="117"/>
    </location>
</feature>
<feature type="binding site" evidence="1">
    <location>
        <position position="11"/>
    </location>
    <ligand>
        <name>ATP</name>
        <dbReference type="ChEBI" id="CHEBI:30616"/>
    </ligand>
</feature>
<feature type="binding site" evidence="1">
    <location>
        <position position="59"/>
    </location>
    <ligand>
        <name>ATP</name>
        <dbReference type="ChEBI" id="CHEBI:30616"/>
    </ligand>
</feature>
<feature type="binding site" evidence="1">
    <location>
        <position position="87"/>
    </location>
    <ligand>
        <name>ATP</name>
        <dbReference type="ChEBI" id="CHEBI:30616"/>
    </ligand>
</feature>
<feature type="binding site" evidence="1">
    <location>
        <position position="93"/>
    </location>
    <ligand>
        <name>ATP</name>
        <dbReference type="ChEBI" id="CHEBI:30616"/>
    </ligand>
</feature>
<feature type="binding site" evidence="1">
    <location>
        <position position="104"/>
    </location>
    <ligand>
        <name>ATP</name>
        <dbReference type="ChEBI" id="CHEBI:30616"/>
    </ligand>
</feature>
<feature type="binding site" evidence="1">
    <location>
        <position position="114"/>
    </location>
    <ligand>
        <name>ATP</name>
        <dbReference type="ChEBI" id="CHEBI:30616"/>
    </ligand>
</feature>
<evidence type="ECO:0000255" key="1">
    <source>
        <dbReference type="HAMAP-Rule" id="MF_00451"/>
    </source>
</evidence>
<evidence type="ECO:0000305" key="2"/>
<gene>
    <name evidence="1" type="primary">ndk</name>
    <name type="ordered locus">TP_1010</name>
</gene>